<comment type="function">
    <text>Not known. Probably involved in quinate metabolism.</text>
</comment>
<comment type="similarity">
    <text evidence="2">Belongs to the inositol monophosphatase superfamily.</text>
</comment>
<comment type="sequence caution" evidence="2">
    <conflict type="erroneous gene model prediction">
        <sequence resource="EMBL-CDS" id="EAA66254"/>
    </conflict>
</comment>
<gene>
    <name type="primary">qutG</name>
    <name type="ORF">AN1136</name>
</gene>
<evidence type="ECO:0000250" key="1"/>
<evidence type="ECO:0000305" key="2"/>
<reference key="1">
    <citation type="journal article" date="1988" name="Mol. Gen. Genet.">
        <title>Molecular organisation of the quinic acid utilization (QUT) gene cluster in Aspergillus nidulans.</title>
        <authorList>
            <person name="Hawkins A.R."/>
            <person name="Lamb H.K."/>
            <person name="Smith M."/>
            <person name="Keyte J.W."/>
            <person name="Roberts C.F."/>
        </authorList>
    </citation>
    <scope>NUCLEOTIDE SEQUENCE [GENOMIC DNA]</scope>
</reference>
<reference key="2">
    <citation type="journal article" date="2005" name="Nature">
        <title>Sequencing of Aspergillus nidulans and comparative analysis with A. fumigatus and A. oryzae.</title>
        <authorList>
            <person name="Galagan J.E."/>
            <person name="Calvo S.E."/>
            <person name="Cuomo C."/>
            <person name="Ma L.-J."/>
            <person name="Wortman J.R."/>
            <person name="Batzoglou S."/>
            <person name="Lee S.-I."/>
            <person name="Bastuerkmen M."/>
            <person name="Spevak C.C."/>
            <person name="Clutterbuck J."/>
            <person name="Kapitonov V."/>
            <person name="Jurka J."/>
            <person name="Scazzocchio C."/>
            <person name="Farman M.L."/>
            <person name="Butler J."/>
            <person name="Purcell S."/>
            <person name="Harris S."/>
            <person name="Braus G.H."/>
            <person name="Draht O."/>
            <person name="Busch S."/>
            <person name="D'Enfert C."/>
            <person name="Bouchier C."/>
            <person name="Goldman G.H."/>
            <person name="Bell-Pedersen D."/>
            <person name="Griffiths-Jones S."/>
            <person name="Doonan J.H."/>
            <person name="Yu J."/>
            <person name="Vienken K."/>
            <person name="Pain A."/>
            <person name="Freitag M."/>
            <person name="Selker E.U."/>
            <person name="Archer D.B."/>
            <person name="Penalva M.A."/>
            <person name="Oakley B.R."/>
            <person name="Momany M."/>
            <person name="Tanaka T."/>
            <person name="Kumagai T."/>
            <person name="Asai K."/>
            <person name="Machida M."/>
            <person name="Nierman W.C."/>
            <person name="Denning D.W."/>
            <person name="Caddick M.X."/>
            <person name="Hynes M."/>
            <person name="Paoletti M."/>
            <person name="Fischer R."/>
            <person name="Miller B.L."/>
            <person name="Dyer P.S."/>
            <person name="Sachs M.S."/>
            <person name="Osmani S.A."/>
            <person name="Birren B.W."/>
        </authorList>
    </citation>
    <scope>NUCLEOTIDE SEQUENCE [LARGE SCALE GENOMIC DNA]</scope>
    <source>
        <strain>FGSC A4 / ATCC 38163 / CBS 112.46 / NRRL 194 / M139</strain>
    </source>
</reference>
<reference key="3">
    <citation type="journal article" date="2009" name="Fungal Genet. Biol.">
        <title>The 2008 update of the Aspergillus nidulans genome annotation: a community effort.</title>
        <authorList>
            <person name="Wortman J.R."/>
            <person name="Gilsenan J.M."/>
            <person name="Joardar V."/>
            <person name="Deegan J."/>
            <person name="Clutterbuck J."/>
            <person name="Andersen M.R."/>
            <person name="Archer D."/>
            <person name="Bencina M."/>
            <person name="Braus G."/>
            <person name="Coutinho P."/>
            <person name="von Dohren H."/>
            <person name="Doonan J."/>
            <person name="Driessen A.J."/>
            <person name="Durek P."/>
            <person name="Espeso E."/>
            <person name="Fekete E."/>
            <person name="Flipphi M."/>
            <person name="Estrada C.G."/>
            <person name="Geysens S."/>
            <person name="Goldman G."/>
            <person name="de Groot P.W."/>
            <person name="Hansen K."/>
            <person name="Harris S.D."/>
            <person name="Heinekamp T."/>
            <person name="Helmstaedt K."/>
            <person name="Henrissat B."/>
            <person name="Hofmann G."/>
            <person name="Homan T."/>
            <person name="Horio T."/>
            <person name="Horiuchi H."/>
            <person name="James S."/>
            <person name="Jones M."/>
            <person name="Karaffa L."/>
            <person name="Karanyi Z."/>
            <person name="Kato M."/>
            <person name="Keller N."/>
            <person name="Kelly D.E."/>
            <person name="Kiel J.A."/>
            <person name="Kim J.M."/>
            <person name="van der Klei I.J."/>
            <person name="Klis F.M."/>
            <person name="Kovalchuk A."/>
            <person name="Krasevec N."/>
            <person name="Kubicek C.P."/>
            <person name="Liu B."/>
            <person name="Maccabe A."/>
            <person name="Meyer V."/>
            <person name="Mirabito P."/>
            <person name="Miskei M."/>
            <person name="Mos M."/>
            <person name="Mullins J."/>
            <person name="Nelson D.R."/>
            <person name="Nielsen J."/>
            <person name="Oakley B.R."/>
            <person name="Osmani S.A."/>
            <person name="Pakula T."/>
            <person name="Paszewski A."/>
            <person name="Paulsen I."/>
            <person name="Pilsyk S."/>
            <person name="Pocsi I."/>
            <person name="Punt P.J."/>
            <person name="Ram A.F."/>
            <person name="Ren Q."/>
            <person name="Robellet X."/>
            <person name="Robson G."/>
            <person name="Seiboth B."/>
            <person name="van Solingen P."/>
            <person name="Specht T."/>
            <person name="Sun J."/>
            <person name="Taheri-Talesh N."/>
            <person name="Takeshita N."/>
            <person name="Ussery D."/>
            <person name="vanKuyk P.A."/>
            <person name="Visser H."/>
            <person name="van de Vondervoort P.J."/>
            <person name="de Vries R.P."/>
            <person name="Walton J."/>
            <person name="Xiang X."/>
            <person name="Xiong Y."/>
            <person name="Zeng A.P."/>
            <person name="Brandt B.W."/>
            <person name="Cornell M.J."/>
            <person name="van den Hondel C.A."/>
            <person name="Visser J."/>
            <person name="Oliver S.G."/>
            <person name="Turner G."/>
        </authorList>
    </citation>
    <scope>GENOME REANNOTATION</scope>
    <source>
        <strain>FGSC A4 / ATCC 38163 / CBS 112.46 / NRRL 194 / M139</strain>
    </source>
</reference>
<reference key="4">
    <citation type="journal article" date="1990" name="Mol. Gen. Genet.">
        <title>Spatial and biological characterisation of the complete quinic acid utilisation gene cluster in Aspergillus nidulans.</title>
        <authorList>
            <person name="Lamb H.K."/>
            <person name="Hawkins A.R."/>
            <person name="Smith M."/>
            <person name="Harvey I.J."/>
            <person name="Brown J."/>
            <person name="Turner G."/>
            <person name="Roberts C.F."/>
        </authorList>
    </citation>
    <scope>SIMILARITY TO INOSITOL MONOPHOSPHATASE</scope>
</reference>
<sequence length="330" mass="36792">MDCPIPQTELDEIYAFATDLARKAGQLLLERVNDRNSEQVYAEKENAVDLVTQTDEDVESLIKTAIQTKYPAHKFLGEESYAKGQSREYLIDEQPTWCVDPLDGTVNFTHAFPMFCVSIGFIVNHYPVIGVIYAPMLNQLFSSCLNRGAWLNEMQQLPLIRKPSIPPLPATAPSKCIFACEWGKDRRDIPDGTLQRKIESFVNMAAERGSRGGKGGMVHGVRSLGSATMDLAYTAMGSVDIWWEGGCWEWDVAAGIAILLEAGGLVTAANPPEDIEGPIEPVKLGSRLYLAIRPAGPSETETGRETQERTVREVWRRVRQLDYERPTRQS</sequence>
<feature type="chain" id="PRO_0000142540" description="Protein qutG">
    <location>
        <begin position="1"/>
        <end position="330"/>
    </location>
</feature>
<feature type="binding site" evidence="1">
    <location>
        <position position="78"/>
    </location>
    <ligand>
        <name>Mg(2+)</name>
        <dbReference type="ChEBI" id="CHEBI:18420"/>
        <label>1</label>
    </ligand>
</feature>
<feature type="binding site" evidence="1">
    <location>
        <position position="78"/>
    </location>
    <ligand>
        <name>substrate</name>
    </ligand>
</feature>
<feature type="binding site" evidence="1">
    <location>
        <position position="100"/>
    </location>
    <ligand>
        <name>Mg(2+)</name>
        <dbReference type="ChEBI" id="CHEBI:18420"/>
        <label>1</label>
    </ligand>
</feature>
<feature type="binding site" evidence="1">
    <location>
        <position position="100"/>
    </location>
    <ligand>
        <name>Mg(2+)</name>
        <dbReference type="ChEBI" id="CHEBI:18420"/>
        <label>2</label>
    </ligand>
</feature>
<feature type="binding site" evidence="1">
    <location>
        <begin position="102"/>
        <end position="105"/>
    </location>
    <ligand>
        <name>substrate</name>
    </ligand>
</feature>
<feature type="binding site" evidence="1">
    <location>
        <position position="102"/>
    </location>
    <ligand>
        <name>Mg(2+)</name>
        <dbReference type="ChEBI" id="CHEBI:18420"/>
        <label>1</label>
    </ligand>
</feature>
<feature type="binding site" evidence="1">
    <location>
        <position position="103"/>
    </location>
    <ligand>
        <name>Mg(2+)</name>
        <dbReference type="ChEBI" id="CHEBI:18420"/>
        <label>2</label>
    </ligand>
</feature>
<feature type="binding site" evidence="1">
    <location>
        <position position="251"/>
    </location>
    <ligand>
        <name>Mg(2+)</name>
        <dbReference type="ChEBI" id="CHEBI:18420"/>
        <label>2</label>
    </ligand>
</feature>
<feature type="binding site" evidence="1">
    <location>
        <position position="251"/>
    </location>
    <ligand>
        <name>substrate</name>
    </ligand>
</feature>
<feature type="sequence conflict" description="In Ref. 1; CAA31878." evidence="2" ref="1">
    <original>Q</original>
    <variation>E</variation>
    <location>
        <position position="85"/>
    </location>
</feature>
<feature type="sequence conflict" description="In Ref. 1; CAA31878." evidence="2" ref="1">
    <original>T</original>
    <variation>A</variation>
    <location>
        <position position="327"/>
    </location>
</feature>
<organism>
    <name type="scientific">Emericella nidulans (strain FGSC A4 / ATCC 38163 / CBS 112.46 / NRRL 194 / M139)</name>
    <name type="common">Aspergillus nidulans</name>
    <dbReference type="NCBI Taxonomy" id="227321"/>
    <lineage>
        <taxon>Eukaryota</taxon>
        <taxon>Fungi</taxon>
        <taxon>Dikarya</taxon>
        <taxon>Ascomycota</taxon>
        <taxon>Pezizomycotina</taxon>
        <taxon>Eurotiomycetes</taxon>
        <taxon>Eurotiomycetidae</taxon>
        <taxon>Eurotiales</taxon>
        <taxon>Aspergillaceae</taxon>
        <taxon>Aspergillus</taxon>
        <taxon>Aspergillus subgen. Nidulantes</taxon>
    </lineage>
</organism>
<name>QUTG_EMENI</name>
<protein>
    <recommendedName>
        <fullName>Protein qutG</fullName>
    </recommendedName>
</protein>
<keyword id="KW-0460">Magnesium</keyword>
<keyword id="KW-0479">Metal-binding</keyword>
<keyword id="KW-0672">Quinate metabolism</keyword>
<keyword id="KW-1185">Reference proteome</keyword>
<dbReference type="EMBL" id="X13525">
    <property type="protein sequence ID" value="CAA31878.1"/>
    <property type="molecule type" value="Genomic_DNA"/>
</dbReference>
<dbReference type="EMBL" id="AACD01000016">
    <property type="protein sequence ID" value="EAA66254.1"/>
    <property type="status" value="ALT_SEQ"/>
    <property type="molecule type" value="Genomic_DNA"/>
</dbReference>
<dbReference type="EMBL" id="BN001308">
    <property type="protein sequence ID" value="CBF88072.1"/>
    <property type="molecule type" value="Genomic_DNA"/>
</dbReference>
<dbReference type="PIR" id="S08500">
    <property type="entry name" value="S08500"/>
</dbReference>
<dbReference type="RefSeq" id="XP_658740.1">
    <property type="nucleotide sequence ID" value="XM_653648.1"/>
</dbReference>
<dbReference type="SMR" id="P25416"/>
<dbReference type="FunCoup" id="P25416">
    <property type="interactions" value="419"/>
</dbReference>
<dbReference type="STRING" id="227321.P25416"/>
<dbReference type="EnsemblFungi" id="CBF88072">
    <property type="protein sequence ID" value="CBF88072"/>
    <property type="gene ID" value="ANIA_01136"/>
</dbReference>
<dbReference type="VEuPathDB" id="FungiDB:AN1136"/>
<dbReference type="eggNOG" id="KOG2951">
    <property type="taxonomic scope" value="Eukaryota"/>
</dbReference>
<dbReference type="HOGENOM" id="CLU_044118_1_2_1"/>
<dbReference type="InParanoid" id="P25416"/>
<dbReference type="OMA" id="QTIHYGR"/>
<dbReference type="OrthoDB" id="10254945at2759"/>
<dbReference type="Proteomes" id="UP000000560">
    <property type="component" value="Chromosome VIII"/>
</dbReference>
<dbReference type="GO" id="GO:0008934">
    <property type="term" value="F:inositol monophosphate 1-phosphatase activity"/>
    <property type="evidence" value="ECO:0000318"/>
    <property type="project" value="GO_Central"/>
</dbReference>
<dbReference type="GO" id="GO:0046872">
    <property type="term" value="F:metal ion binding"/>
    <property type="evidence" value="ECO:0007669"/>
    <property type="project" value="UniProtKB-KW"/>
</dbReference>
<dbReference type="GO" id="GO:0006020">
    <property type="term" value="P:inositol metabolic process"/>
    <property type="evidence" value="ECO:0000318"/>
    <property type="project" value="GO_Central"/>
</dbReference>
<dbReference type="GO" id="GO:0046854">
    <property type="term" value="P:phosphatidylinositol phosphate biosynthetic process"/>
    <property type="evidence" value="ECO:0007669"/>
    <property type="project" value="InterPro"/>
</dbReference>
<dbReference type="GO" id="GO:0019630">
    <property type="term" value="P:quinate metabolic process"/>
    <property type="evidence" value="ECO:0007669"/>
    <property type="project" value="UniProtKB-KW"/>
</dbReference>
<dbReference type="GO" id="GO:0007165">
    <property type="term" value="P:signal transduction"/>
    <property type="evidence" value="ECO:0000318"/>
    <property type="project" value="GO_Central"/>
</dbReference>
<dbReference type="CDD" id="cd01639">
    <property type="entry name" value="IMPase"/>
    <property type="match status" value="1"/>
</dbReference>
<dbReference type="FunFam" id="3.30.540.10:FF:000004">
    <property type="entry name" value="Inositol-1-monophosphatase"/>
    <property type="match status" value="1"/>
</dbReference>
<dbReference type="FunFam" id="3.40.190.80:FF:000019">
    <property type="entry name" value="Inositol-1-monophosphatase"/>
    <property type="match status" value="1"/>
</dbReference>
<dbReference type="Gene3D" id="3.40.190.80">
    <property type="match status" value="1"/>
</dbReference>
<dbReference type="Gene3D" id="3.30.540.10">
    <property type="entry name" value="Fructose-1,6-Bisphosphatase, subunit A, domain 1"/>
    <property type="match status" value="1"/>
</dbReference>
<dbReference type="InterPro" id="IPR033942">
    <property type="entry name" value="IMPase"/>
</dbReference>
<dbReference type="InterPro" id="IPR020583">
    <property type="entry name" value="Inositol_monoP_metal-BS"/>
</dbReference>
<dbReference type="InterPro" id="IPR000760">
    <property type="entry name" value="Inositol_monophosphatase-like"/>
</dbReference>
<dbReference type="InterPro" id="IPR020550">
    <property type="entry name" value="Inositol_monophosphatase_CS"/>
</dbReference>
<dbReference type="PANTHER" id="PTHR20854">
    <property type="entry name" value="INOSITOL MONOPHOSPHATASE"/>
    <property type="match status" value="1"/>
</dbReference>
<dbReference type="PANTHER" id="PTHR20854:SF39">
    <property type="entry name" value="PROTEIN QUTG"/>
    <property type="match status" value="1"/>
</dbReference>
<dbReference type="Pfam" id="PF00459">
    <property type="entry name" value="Inositol_P"/>
    <property type="match status" value="1"/>
</dbReference>
<dbReference type="PRINTS" id="PR00377">
    <property type="entry name" value="IMPHPHTASES"/>
</dbReference>
<dbReference type="SUPFAM" id="SSF56655">
    <property type="entry name" value="Carbohydrate phosphatase"/>
    <property type="match status" value="1"/>
</dbReference>
<dbReference type="PROSITE" id="PS00629">
    <property type="entry name" value="IMP_1"/>
    <property type="match status" value="1"/>
</dbReference>
<dbReference type="PROSITE" id="PS00630">
    <property type="entry name" value="IMP_2"/>
    <property type="match status" value="1"/>
</dbReference>
<proteinExistence type="inferred from homology"/>
<accession>P25416</accession>
<accession>C8VTB1</accession>
<accession>Q5BE94</accession>